<sequence length="1094" mass="120748">MAARQAVGSGAQETCGLDRILEALKLLLSPGGSGSSSLQVTKHDVLLATLKSNLSALEDKFLKDPQWKNLKLLRDEIADKAEWPQNSVDVTWSFTSQTLLLLLCLKETMIRLAANFNPGKPNPRTPEVAPALSPDALSISQQKTVQFVLQFVVTLGICPYLMPGVGVPLRYRTEFGAVVQDVVCFDAAPDATRRLYTSCKALLNVAQHTSLGSLIFCHHFGDIAAGLCQLGFCPTKRKLLTPAEEVLTEEERTLSRGALRDMLDQVYQPLAVRELLILQGGPPQSCTDVKTQMRCRAPAWLRRLCGQLLSERLMRPNGVQAVVRGILEGAGAGAAGGSDAEVTAADWKKCDLIAKILASCPQQSLSPENYYRDICPQVLDLFHFQDKLTARQFQRVATTTFITLSRERPHLAAKYLLQPVLAPLHRCLNTAELSESDMVPGTILVTEEELSRCIEDVFKVYVVGNEPLTVLMDSLLPVLGVLFLLYCFTKQSVSHIRSLCQEILLWILGKLERKKAIASLKGFAGLDKAVPSLHSLCQFRVATQGGIMITIKEAISDEDEDEALYQKVSSEQGRVEHLGDLLSHCQECGLAGDFFIFCLKELTHVASENETELKTEPFSSKSLLELEQHQTLLVEGQERKLLVLQLMAVLCERMSEQIFTNVTQVVDFVAATLQRACASLAHQAESTVESQTLSMSMGLVAVMLGGAVQLKSSDFAVLKQLLPLLEKVSNTYPDPVIQELAVDLRITISTHGAFATEAVSMAAQSTLNRKDLEGKIEEQQQTSHERPTDVAHSHLEQQQSHETAPQTGLQSNAPIIPQGVNEPSTTTSQKSGSVTTEQLQEVLLSAYDPQIPTRAAALRTLSHWIEQREAKALEMQEKLLKIFLENLEHEDTFVYLSAIQGVALLSDVYPEKILPDLLAQYDSSKDKHTPETRMKVGEVLMRIVRALGDMVSKYREPLIHTFLRGVRDPDGAHRASSLANLGELCQRLDFLLGSVVHEVTACLIAVAKTDGEVQVRRAAIHVVVLLLRGLSQKATEVLSAVLKDLYHLLKHVVCLEPDDVAKLHAQLALEELDDIMKNFLFPPQKLEKKIMVLP</sequence>
<dbReference type="EMBL" id="AB051533">
    <property type="protein sequence ID" value="BAB21837.1"/>
    <property type="status" value="ALT_INIT"/>
    <property type="molecule type" value="mRNA"/>
</dbReference>
<dbReference type="EMBL" id="AC009027">
    <property type="status" value="NOT_ANNOTATED_CDS"/>
    <property type="molecule type" value="Genomic_DNA"/>
</dbReference>
<dbReference type="EMBL" id="AC009082">
    <property type="status" value="NOT_ANNOTATED_CDS"/>
    <property type="molecule type" value="Genomic_DNA"/>
</dbReference>
<dbReference type="EMBL" id="AC009137">
    <property type="status" value="NOT_ANNOTATED_CDS"/>
    <property type="molecule type" value="Genomic_DNA"/>
</dbReference>
<dbReference type="EMBL" id="AK022750">
    <property type="protein sequence ID" value="BAB14224.1"/>
    <property type="status" value="ALT_INIT"/>
    <property type="molecule type" value="mRNA"/>
</dbReference>
<dbReference type="CCDS" id="CCDS45516.1"/>
<dbReference type="RefSeq" id="NP_078838.1">
    <property type="nucleotide sequence ID" value="NM_024562.2"/>
</dbReference>
<dbReference type="SMR" id="Q9C0B7"/>
<dbReference type="BioGRID" id="122747">
    <property type="interactions" value="111"/>
</dbReference>
<dbReference type="FunCoup" id="Q9C0B7">
    <property type="interactions" value="1579"/>
</dbReference>
<dbReference type="IntAct" id="Q9C0B7">
    <property type="interactions" value="51"/>
</dbReference>
<dbReference type="STRING" id="9606.ENSP00000261778"/>
<dbReference type="iPTMnet" id="Q9C0B7"/>
<dbReference type="PhosphoSitePlus" id="Q9C0B7"/>
<dbReference type="SwissPalm" id="Q9C0B7"/>
<dbReference type="BioMuta" id="TANGO6"/>
<dbReference type="DMDM" id="158706353"/>
<dbReference type="jPOST" id="Q9C0B7"/>
<dbReference type="MassIVE" id="Q9C0B7"/>
<dbReference type="PaxDb" id="9606-ENSP00000261778"/>
<dbReference type="PeptideAtlas" id="Q9C0B7"/>
<dbReference type="ProteomicsDB" id="79993"/>
<dbReference type="Pumba" id="Q9C0B7"/>
<dbReference type="Antibodypedia" id="50648">
    <property type="antibodies" value="62 antibodies from 14 providers"/>
</dbReference>
<dbReference type="DNASU" id="79613"/>
<dbReference type="Ensembl" id="ENST00000261778.2">
    <property type="protein sequence ID" value="ENSP00000261778.1"/>
    <property type="gene ID" value="ENSG00000103047.8"/>
</dbReference>
<dbReference type="GeneID" id="79613"/>
<dbReference type="KEGG" id="hsa:79613"/>
<dbReference type="MANE-Select" id="ENST00000261778.2">
    <property type="protein sequence ID" value="ENSP00000261778.1"/>
    <property type="RefSeq nucleotide sequence ID" value="NM_024562.2"/>
    <property type="RefSeq protein sequence ID" value="NP_078838.1"/>
</dbReference>
<dbReference type="UCSC" id="uc002ewi.5">
    <property type="organism name" value="human"/>
</dbReference>
<dbReference type="AGR" id="HGNC:25749"/>
<dbReference type="CTD" id="79613"/>
<dbReference type="DisGeNET" id="79613"/>
<dbReference type="GeneCards" id="TANGO6"/>
<dbReference type="HGNC" id="HGNC:25749">
    <property type="gene designation" value="TANGO6"/>
</dbReference>
<dbReference type="HPA" id="ENSG00000103047">
    <property type="expression patterns" value="Low tissue specificity"/>
</dbReference>
<dbReference type="MIM" id="620188">
    <property type="type" value="gene"/>
</dbReference>
<dbReference type="neXtProt" id="NX_Q9C0B7"/>
<dbReference type="OpenTargets" id="ENSG00000103047"/>
<dbReference type="PharmGKB" id="PA162405811"/>
<dbReference type="VEuPathDB" id="HostDB:ENSG00000103047"/>
<dbReference type="eggNOG" id="KOG4653">
    <property type="taxonomic scope" value="Eukaryota"/>
</dbReference>
<dbReference type="GeneTree" id="ENSGT00390000010938"/>
<dbReference type="HOGENOM" id="CLU_006971_1_0_1"/>
<dbReference type="InParanoid" id="Q9C0B7"/>
<dbReference type="OMA" id="QVATLIC"/>
<dbReference type="OrthoDB" id="39591at2759"/>
<dbReference type="PAN-GO" id="Q9C0B7">
    <property type="GO annotations" value="1 GO annotation based on evolutionary models"/>
</dbReference>
<dbReference type="PhylomeDB" id="Q9C0B7"/>
<dbReference type="TreeFam" id="TF330876"/>
<dbReference type="PathwayCommons" id="Q9C0B7"/>
<dbReference type="SignaLink" id="Q9C0B7"/>
<dbReference type="BioGRID-ORCS" id="79613">
    <property type="hits" value="783 hits in 1156 CRISPR screens"/>
</dbReference>
<dbReference type="ChiTaRS" id="TANGO6">
    <property type="organism name" value="human"/>
</dbReference>
<dbReference type="GenomeRNAi" id="79613"/>
<dbReference type="Pharos" id="Q9C0B7">
    <property type="development level" value="Tdark"/>
</dbReference>
<dbReference type="PRO" id="PR:Q9C0B7"/>
<dbReference type="Proteomes" id="UP000005640">
    <property type="component" value="Chromosome 16"/>
</dbReference>
<dbReference type="RNAct" id="Q9C0B7">
    <property type="molecule type" value="protein"/>
</dbReference>
<dbReference type="Bgee" id="ENSG00000103047">
    <property type="expression patterns" value="Expressed in bone marrow cell and 112 other cell types or tissues"/>
</dbReference>
<dbReference type="ExpressionAtlas" id="Q9C0B7">
    <property type="expression patterns" value="baseline and differential"/>
</dbReference>
<dbReference type="GO" id="GO:0016020">
    <property type="term" value="C:membrane"/>
    <property type="evidence" value="ECO:0007669"/>
    <property type="project" value="UniProtKB-SubCell"/>
</dbReference>
<dbReference type="GO" id="GO:0009306">
    <property type="term" value="P:protein secretion"/>
    <property type="evidence" value="ECO:0000318"/>
    <property type="project" value="GO_Central"/>
</dbReference>
<dbReference type="FunFam" id="1.25.10.10:FF:000429">
    <property type="entry name" value="Transport and golgi organization 6 homolog"/>
    <property type="match status" value="1"/>
</dbReference>
<dbReference type="Gene3D" id="1.25.10.10">
    <property type="entry name" value="Leucine-rich Repeat Variant"/>
    <property type="match status" value="1"/>
</dbReference>
<dbReference type="InterPro" id="IPR011989">
    <property type="entry name" value="ARM-like"/>
</dbReference>
<dbReference type="InterPro" id="IPR016024">
    <property type="entry name" value="ARM-type_fold"/>
</dbReference>
<dbReference type="InterPro" id="IPR019451">
    <property type="entry name" value="Rtp1_C1"/>
</dbReference>
<dbReference type="InterPro" id="IPR019414">
    <property type="entry name" value="Rtp1_C2"/>
</dbReference>
<dbReference type="InterPro" id="IPR039600">
    <property type="entry name" value="TANGO6/Rtp1"/>
</dbReference>
<dbReference type="PANTHER" id="PTHR20959">
    <property type="entry name" value="TRANSPORT AND GOLGI ORGANIZATION PROTEIN 6 FAMILY MEMBER"/>
    <property type="match status" value="1"/>
</dbReference>
<dbReference type="PANTHER" id="PTHR20959:SF1">
    <property type="entry name" value="TRANSPORT AND GOLGI ORGANIZATION PROTEIN 6 HOMOLOG"/>
    <property type="match status" value="1"/>
</dbReference>
<dbReference type="Pfam" id="PF23565">
    <property type="entry name" value="ARM_TANGO6"/>
    <property type="match status" value="1"/>
</dbReference>
<dbReference type="Pfam" id="PF10363">
    <property type="entry name" value="RTP1_C1"/>
    <property type="match status" value="1"/>
</dbReference>
<dbReference type="Pfam" id="PF10304">
    <property type="entry name" value="RTP1_C2"/>
    <property type="match status" value="1"/>
</dbReference>
<dbReference type="Pfam" id="PF25267">
    <property type="entry name" value="TANGO6_N"/>
    <property type="match status" value="1"/>
</dbReference>
<dbReference type="SUPFAM" id="SSF48371">
    <property type="entry name" value="ARM repeat"/>
    <property type="match status" value="1"/>
</dbReference>
<accession>Q9C0B7</accession>
<accession>Q569F9</accession>
<accession>Q9H9K1</accession>
<organism>
    <name type="scientific">Homo sapiens</name>
    <name type="common">Human</name>
    <dbReference type="NCBI Taxonomy" id="9606"/>
    <lineage>
        <taxon>Eukaryota</taxon>
        <taxon>Metazoa</taxon>
        <taxon>Chordata</taxon>
        <taxon>Craniata</taxon>
        <taxon>Vertebrata</taxon>
        <taxon>Euteleostomi</taxon>
        <taxon>Mammalia</taxon>
        <taxon>Eutheria</taxon>
        <taxon>Euarchontoglires</taxon>
        <taxon>Primates</taxon>
        <taxon>Haplorrhini</taxon>
        <taxon>Catarrhini</taxon>
        <taxon>Hominidae</taxon>
        <taxon>Homo</taxon>
    </lineage>
</organism>
<evidence type="ECO:0000250" key="1">
    <source>
        <dbReference type="UniProtKB" id="Q8C3S2"/>
    </source>
</evidence>
<evidence type="ECO:0000255" key="2"/>
<evidence type="ECO:0000256" key="3">
    <source>
        <dbReference type="SAM" id="MobiDB-lite"/>
    </source>
</evidence>
<evidence type="ECO:0000305" key="4"/>
<protein>
    <recommendedName>
        <fullName>Transport and Golgi organization protein 6 homolog</fullName>
    </recommendedName>
    <alternativeName>
        <fullName>Transmembrane and coiled-coil domain-containing protein 7</fullName>
    </alternativeName>
</protein>
<feature type="chain" id="PRO_0000305059" description="Transport and Golgi organization protein 6 homolog">
    <location>
        <begin position="1"/>
        <end position="1094"/>
    </location>
</feature>
<feature type="transmembrane region" description="Helical" evidence="2">
    <location>
        <begin position="468"/>
        <end position="488"/>
    </location>
</feature>
<feature type="repeat" description="HEAT 1">
    <location>
        <begin position="873"/>
        <end position="909"/>
    </location>
</feature>
<feature type="repeat" description="HEAT 2">
    <location>
        <begin position="952"/>
        <end position="988"/>
    </location>
</feature>
<feature type="region of interest" description="Disordered" evidence="3">
    <location>
        <begin position="777"/>
        <end position="834"/>
    </location>
</feature>
<feature type="compositionally biased region" description="Basic and acidic residues" evidence="3">
    <location>
        <begin position="777"/>
        <end position="795"/>
    </location>
</feature>
<feature type="compositionally biased region" description="Polar residues" evidence="3">
    <location>
        <begin position="796"/>
        <end position="813"/>
    </location>
</feature>
<feature type="compositionally biased region" description="Polar residues" evidence="3">
    <location>
        <begin position="821"/>
        <end position="834"/>
    </location>
</feature>
<feature type="modified residue" description="Phosphoserine" evidence="1">
    <location>
        <position position="556"/>
    </location>
</feature>
<proteinExistence type="evidence at protein level"/>
<reference key="1">
    <citation type="journal article" date="2000" name="DNA Res.">
        <title>Prediction of the coding sequences of unidentified human genes. XIX. The complete sequences of 100 new cDNA clones from brain which code for large proteins in vitro.</title>
        <authorList>
            <person name="Nagase T."/>
            <person name="Kikuno R."/>
            <person name="Hattori A."/>
            <person name="Kondo Y."/>
            <person name="Okumura K."/>
            <person name="Ohara O."/>
        </authorList>
    </citation>
    <scope>NUCLEOTIDE SEQUENCE [LARGE SCALE MRNA]</scope>
    <source>
        <tissue>Brain</tissue>
    </source>
</reference>
<reference key="2">
    <citation type="journal article" date="2004" name="Nature">
        <title>The sequence and analysis of duplication-rich human chromosome 16.</title>
        <authorList>
            <person name="Martin J."/>
            <person name="Han C."/>
            <person name="Gordon L.A."/>
            <person name="Terry A."/>
            <person name="Prabhakar S."/>
            <person name="She X."/>
            <person name="Xie G."/>
            <person name="Hellsten U."/>
            <person name="Chan Y.M."/>
            <person name="Altherr M."/>
            <person name="Couronne O."/>
            <person name="Aerts A."/>
            <person name="Bajorek E."/>
            <person name="Black S."/>
            <person name="Blumer H."/>
            <person name="Branscomb E."/>
            <person name="Brown N.C."/>
            <person name="Bruno W.J."/>
            <person name="Buckingham J.M."/>
            <person name="Callen D.F."/>
            <person name="Campbell C.S."/>
            <person name="Campbell M.L."/>
            <person name="Campbell E.W."/>
            <person name="Caoile C."/>
            <person name="Challacombe J.F."/>
            <person name="Chasteen L.A."/>
            <person name="Chertkov O."/>
            <person name="Chi H.C."/>
            <person name="Christensen M."/>
            <person name="Clark L.M."/>
            <person name="Cohn J.D."/>
            <person name="Denys M."/>
            <person name="Detter J.C."/>
            <person name="Dickson M."/>
            <person name="Dimitrijevic-Bussod M."/>
            <person name="Escobar J."/>
            <person name="Fawcett J.J."/>
            <person name="Flowers D."/>
            <person name="Fotopulos D."/>
            <person name="Glavina T."/>
            <person name="Gomez M."/>
            <person name="Gonzales E."/>
            <person name="Goodstein D."/>
            <person name="Goodwin L.A."/>
            <person name="Grady D.L."/>
            <person name="Grigoriev I."/>
            <person name="Groza M."/>
            <person name="Hammon N."/>
            <person name="Hawkins T."/>
            <person name="Haydu L."/>
            <person name="Hildebrand C.E."/>
            <person name="Huang W."/>
            <person name="Israni S."/>
            <person name="Jett J."/>
            <person name="Jewett P.B."/>
            <person name="Kadner K."/>
            <person name="Kimball H."/>
            <person name="Kobayashi A."/>
            <person name="Krawczyk M.-C."/>
            <person name="Leyba T."/>
            <person name="Longmire J.L."/>
            <person name="Lopez F."/>
            <person name="Lou Y."/>
            <person name="Lowry S."/>
            <person name="Ludeman T."/>
            <person name="Manohar C.F."/>
            <person name="Mark G.A."/>
            <person name="McMurray K.L."/>
            <person name="Meincke L.J."/>
            <person name="Morgan J."/>
            <person name="Moyzis R.K."/>
            <person name="Mundt M.O."/>
            <person name="Munk A.C."/>
            <person name="Nandkeshwar R.D."/>
            <person name="Pitluck S."/>
            <person name="Pollard M."/>
            <person name="Predki P."/>
            <person name="Parson-Quintana B."/>
            <person name="Ramirez L."/>
            <person name="Rash S."/>
            <person name="Retterer J."/>
            <person name="Ricke D.O."/>
            <person name="Robinson D.L."/>
            <person name="Rodriguez A."/>
            <person name="Salamov A."/>
            <person name="Saunders E.H."/>
            <person name="Scott D."/>
            <person name="Shough T."/>
            <person name="Stallings R.L."/>
            <person name="Stalvey M."/>
            <person name="Sutherland R.D."/>
            <person name="Tapia R."/>
            <person name="Tesmer J.G."/>
            <person name="Thayer N."/>
            <person name="Thompson L.S."/>
            <person name="Tice H."/>
            <person name="Torney D.C."/>
            <person name="Tran-Gyamfi M."/>
            <person name="Tsai M."/>
            <person name="Ulanovsky L.E."/>
            <person name="Ustaszewska A."/>
            <person name="Vo N."/>
            <person name="White P.S."/>
            <person name="Williams A.L."/>
            <person name="Wills P.L."/>
            <person name="Wu J.-R."/>
            <person name="Wu K."/>
            <person name="Yang J."/>
            <person name="DeJong P."/>
            <person name="Bruce D."/>
            <person name="Doggett N.A."/>
            <person name="Deaven L."/>
            <person name="Schmutz J."/>
            <person name="Grimwood J."/>
            <person name="Richardson P."/>
            <person name="Rokhsar D.S."/>
            <person name="Eichler E.E."/>
            <person name="Gilna P."/>
            <person name="Lucas S.M."/>
            <person name="Myers R.M."/>
            <person name="Rubin E.M."/>
            <person name="Pennacchio L.A."/>
        </authorList>
    </citation>
    <scope>NUCLEOTIDE SEQUENCE [LARGE SCALE GENOMIC DNA]</scope>
</reference>
<reference key="3">
    <citation type="journal article" date="2004" name="Nat. Genet.">
        <title>Complete sequencing and characterization of 21,243 full-length human cDNAs.</title>
        <authorList>
            <person name="Ota T."/>
            <person name="Suzuki Y."/>
            <person name="Nishikawa T."/>
            <person name="Otsuki T."/>
            <person name="Sugiyama T."/>
            <person name="Irie R."/>
            <person name="Wakamatsu A."/>
            <person name="Hayashi K."/>
            <person name="Sato H."/>
            <person name="Nagai K."/>
            <person name="Kimura K."/>
            <person name="Makita H."/>
            <person name="Sekine M."/>
            <person name="Obayashi M."/>
            <person name="Nishi T."/>
            <person name="Shibahara T."/>
            <person name="Tanaka T."/>
            <person name="Ishii S."/>
            <person name="Yamamoto J."/>
            <person name="Saito K."/>
            <person name="Kawai Y."/>
            <person name="Isono Y."/>
            <person name="Nakamura Y."/>
            <person name="Nagahari K."/>
            <person name="Murakami K."/>
            <person name="Yasuda T."/>
            <person name="Iwayanagi T."/>
            <person name="Wagatsuma M."/>
            <person name="Shiratori A."/>
            <person name="Sudo H."/>
            <person name="Hosoiri T."/>
            <person name="Kaku Y."/>
            <person name="Kodaira H."/>
            <person name="Kondo H."/>
            <person name="Sugawara M."/>
            <person name="Takahashi M."/>
            <person name="Kanda K."/>
            <person name="Yokoi T."/>
            <person name="Furuya T."/>
            <person name="Kikkawa E."/>
            <person name="Omura Y."/>
            <person name="Abe K."/>
            <person name="Kamihara K."/>
            <person name="Katsuta N."/>
            <person name="Sato K."/>
            <person name="Tanikawa M."/>
            <person name="Yamazaki M."/>
            <person name="Ninomiya K."/>
            <person name="Ishibashi T."/>
            <person name="Yamashita H."/>
            <person name="Murakawa K."/>
            <person name="Fujimori K."/>
            <person name="Tanai H."/>
            <person name="Kimata M."/>
            <person name="Watanabe M."/>
            <person name="Hiraoka S."/>
            <person name="Chiba Y."/>
            <person name="Ishida S."/>
            <person name="Ono Y."/>
            <person name="Takiguchi S."/>
            <person name="Watanabe S."/>
            <person name="Yosida M."/>
            <person name="Hotuta T."/>
            <person name="Kusano J."/>
            <person name="Kanehori K."/>
            <person name="Takahashi-Fujii A."/>
            <person name="Hara H."/>
            <person name="Tanase T.-O."/>
            <person name="Nomura Y."/>
            <person name="Togiya S."/>
            <person name="Komai F."/>
            <person name="Hara R."/>
            <person name="Takeuchi K."/>
            <person name="Arita M."/>
            <person name="Imose N."/>
            <person name="Musashino K."/>
            <person name="Yuuki H."/>
            <person name="Oshima A."/>
            <person name="Sasaki N."/>
            <person name="Aotsuka S."/>
            <person name="Yoshikawa Y."/>
            <person name="Matsunawa H."/>
            <person name="Ichihara T."/>
            <person name="Shiohata N."/>
            <person name="Sano S."/>
            <person name="Moriya S."/>
            <person name="Momiyama H."/>
            <person name="Satoh N."/>
            <person name="Takami S."/>
            <person name="Terashima Y."/>
            <person name="Suzuki O."/>
            <person name="Nakagawa S."/>
            <person name="Senoh A."/>
            <person name="Mizoguchi H."/>
            <person name="Goto Y."/>
            <person name="Shimizu F."/>
            <person name="Wakebe H."/>
            <person name="Hishigaki H."/>
            <person name="Watanabe T."/>
            <person name="Sugiyama A."/>
            <person name="Takemoto M."/>
            <person name="Kawakami B."/>
            <person name="Yamazaki M."/>
            <person name="Watanabe K."/>
            <person name="Kumagai A."/>
            <person name="Itakura S."/>
            <person name="Fukuzumi Y."/>
            <person name="Fujimori Y."/>
            <person name="Komiyama M."/>
            <person name="Tashiro H."/>
            <person name="Tanigami A."/>
            <person name="Fujiwara T."/>
            <person name="Ono T."/>
            <person name="Yamada K."/>
            <person name="Fujii Y."/>
            <person name="Ozaki K."/>
            <person name="Hirao M."/>
            <person name="Ohmori Y."/>
            <person name="Kawabata A."/>
            <person name="Hikiji T."/>
            <person name="Kobatake N."/>
            <person name="Inagaki H."/>
            <person name="Ikema Y."/>
            <person name="Okamoto S."/>
            <person name="Okitani R."/>
            <person name="Kawakami T."/>
            <person name="Noguchi S."/>
            <person name="Itoh T."/>
            <person name="Shigeta K."/>
            <person name="Senba T."/>
            <person name="Matsumura K."/>
            <person name="Nakajima Y."/>
            <person name="Mizuno T."/>
            <person name="Morinaga M."/>
            <person name="Sasaki M."/>
            <person name="Togashi T."/>
            <person name="Oyama M."/>
            <person name="Hata H."/>
            <person name="Watanabe M."/>
            <person name="Komatsu T."/>
            <person name="Mizushima-Sugano J."/>
            <person name="Satoh T."/>
            <person name="Shirai Y."/>
            <person name="Takahashi Y."/>
            <person name="Nakagawa K."/>
            <person name="Okumura K."/>
            <person name="Nagase T."/>
            <person name="Nomura N."/>
            <person name="Kikuchi H."/>
            <person name="Masuho Y."/>
            <person name="Yamashita R."/>
            <person name="Nakai K."/>
            <person name="Yada T."/>
            <person name="Nakamura Y."/>
            <person name="Ohara O."/>
            <person name="Isogai T."/>
            <person name="Sugano S."/>
        </authorList>
    </citation>
    <scope>NUCLEOTIDE SEQUENCE [LARGE SCALE MRNA] OF 443-1094</scope>
    <source>
        <tissue>Teratocarcinoma</tissue>
    </source>
</reference>
<reference key="4">
    <citation type="journal article" date="2008" name="Proc. Natl. Acad. Sci. U.S.A.">
        <title>A quantitative atlas of mitotic phosphorylation.</title>
        <authorList>
            <person name="Dephoure N."/>
            <person name="Zhou C."/>
            <person name="Villen J."/>
            <person name="Beausoleil S.A."/>
            <person name="Bakalarski C.E."/>
            <person name="Elledge S.J."/>
            <person name="Gygi S.P."/>
        </authorList>
    </citation>
    <scope>IDENTIFICATION BY MASS SPECTROMETRY [LARGE SCALE ANALYSIS]</scope>
    <source>
        <tissue>Cervix carcinoma</tissue>
    </source>
</reference>
<comment type="subcellular location">
    <subcellularLocation>
        <location evidence="4">Membrane</location>
        <topology evidence="4">Single-pass membrane protein</topology>
    </subcellularLocation>
</comment>
<comment type="similarity">
    <text evidence="4">Belongs to the Tango6 family.</text>
</comment>
<comment type="sequence caution" evidence="4">
    <conflict type="erroneous initiation">
        <sequence resource="EMBL-CDS" id="BAB14224"/>
    </conflict>
    <text>Extended N-terminus.</text>
</comment>
<comment type="sequence caution" evidence="4">
    <conflict type="erroneous initiation">
        <sequence resource="EMBL-CDS" id="BAB21837"/>
    </conflict>
    <text>Truncated N-terminus.</text>
</comment>
<gene>
    <name type="primary">TANGO6</name>
    <name type="synonym">KIAA1746</name>
    <name type="synonym">TMCO7</name>
</gene>
<name>TNG6_HUMAN</name>
<keyword id="KW-0472">Membrane</keyword>
<keyword id="KW-0597">Phosphoprotein</keyword>
<keyword id="KW-1267">Proteomics identification</keyword>
<keyword id="KW-1185">Reference proteome</keyword>
<keyword id="KW-0677">Repeat</keyword>
<keyword id="KW-0812">Transmembrane</keyword>
<keyword id="KW-1133">Transmembrane helix</keyword>